<dbReference type="EC" id="3.4.21.35"/>
<dbReference type="EMBL" id="M17962">
    <property type="protein sequence ID" value="AAA37541.1"/>
    <property type="molecule type" value="mRNA"/>
</dbReference>
<dbReference type="EMBL" id="M17985">
    <property type="protein sequence ID" value="AAA37681.1"/>
    <property type="molecule type" value="Genomic_DNA"/>
</dbReference>
<dbReference type="EMBL" id="M17983">
    <property type="protein sequence ID" value="AAA37681.1"/>
    <property type="status" value="JOINED"/>
    <property type="molecule type" value="Genomic_DNA"/>
</dbReference>
<dbReference type="EMBL" id="M17984">
    <property type="protein sequence ID" value="AAA37681.1"/>
    <property type="status" value="JOINED"/>
    <property type="molecule type" value="Genomic_DNA"/>
</dbReference>
<dbReference type="EMBL" id="BC024624">
    <property type="protein sequence ID" value="AAH24624.1"/>
    <property type="molecule type" value="mRNA"/>
</dbReference>
<dbReference type="EMBL" id="BC048869">
    <property type="protein sequence ID" value="AAH48869.1"/>
    <property type="molecule type" value="mRNA"/>
</dbReference>
<dbReference type="EMBL" id="M18588">
    <property type="protein sequence ID" value="AAA39350.1"/>
    <property type="status" value="ALT_SEQ"/>
    <property type="molecule type" value="Genomic_DNA"/>
</dbReference>
<dbReference type="EMBL" id="M18608">
    <property type="protein sequence ID" value="AAA39351.1"/>
    <property type="molecule type" value="Genomic_DNA"/>
</dbReference>
<dbReference type="CCDS" id="CCDS21191.1"/>
<dbReference type="PIR" id="C29746">
    <property type="entry name" value="A29745"/>
</dbReference>
<dbReference type="PIR" id="I70014">
    <property type="entry name" value="I70014"/>
</dbReference>
<dbReference type="RefSeq" id="NP_034246.1">
    <property type="nucleotide sequence ID" value="NM_010116.1"/>
</dbReference>
<dbReference type="SMR" id="P15949"/>
<dbReference type="FunCoup" id="P15949">
    <property type="interactions" value="72"/>
</dbReference>
<dbReference type="STRING" id="10090.ENSMUSP00000080133"/>
<dbReference type="MEROPS" id="S01.071"/>
<dbReference type="GlyCosmos" id="P15949">
    <property type="glycosylation" value="1 site, No reported glycans"/>
</dbReference>
<dbReference type="GlyGen" id="P15949">
    <property type="glycosylation" value="1 site"/>
</dbReference>
<dbReference type="jPOST" id="P15949"/>
<dbReference type="PaxDb" id="10090-ENSMUSP00000080133"/>
<dbReference type="ProteomicsDB" id="269141"/>
<dbReference type="DNASU" id="13648"/>
<dbReference type="Ensembl" id="ENSMUST00000081399.4">
    <property type="protein sequence ID" value="ENSMUSP00000080133.4"/>
    <property type="gene ID" value="ENSMUSG00000059042.4"/>
</dbReference>
<dbReference type="GeneID" id="13648"/>
<dbReference type="KEGG" id="mmu:13648"/>
<dbReference type="UCSC" id="uc009god.1">
    <property type="organism name" value="mouse"/>
</dbReference>
<dbReference type="AGR" id="MGI:95293"/>
<dbReference type="CTD" id="13648"/>
<dbReference type="MGI" id="MGI:95293">
    <property type="gene designation" value="Klk1b9"/>
</dbReference>
<dbReference type="VEuPathDB" id="HostDB:ENSMUSG00000059042"/>
<dbReference type="eggNOG" id="KOG3627">
    <property type="taxonomic scope" value="Eukaryota"/>
</dbReference>
<dbReference type="GeneTree" id="ENSGT01020000230389"/>
<dbReference type="HOGENOM" id="CLU_006842_1_1_1"/>
<dbReference type="InParanoid" id="P15949"/>
<dbReference type="OMA" id="RYNEYIC"/>
<dbReference type="OrthoDB" id="10061449at2759"/>
<dbReference type="PhylomeDB" id="P15949"/>
<dbReference type="TreeFam" id="TF331065"/>
<dbReference type="BRENDA" id="3.4.21.B40">
    <property type="organism ID" value="3474"/>
</dbReference>
<dbReference type="Reactome" id="R-MMU-1592389">
    <property type="pathway name" value="Activation of Matrix Metalloproteinases"/>
</dbReference>
<dbReference type="BioGRID-ORCS" id="13648">
    <property type="hits" value="3 hits in 75 CRISPR screens"/>
</dbReference>
<dbReference type="ChiTaRS" id="Klk1b9">
    <property type="organism name" value="mouse"/>
</dbReference>
<dbReference type="PRO" id="PR:P15949"/>
<dbReference type="Proteomes" id="UP000000589">
    <property type="component" value="Chromosome 7"/>
</dbReference>
<dbReference type="RNAct" id="P15949">
    <property type="molecule type" value="protein"/>
</dbReference>
<dbReference type="Bgee" id="ENSMUSG00000059042">
    <property type="expression patterns" value="Expressed in male reproductive system and 10 other cell types or tissues"/>
</dbReference>
<dbReference type="GO" id="GO:0008233">
    <property type="term" value="F:peptidase activity"/>
    <property type="evidence" value="ECO:0000314"/>
    <property type="project" value="MGI"/>
</dbReference>
<dbReference type="GO" id="GO:0004252">
    <property type="term" value="F:serine-type endopeptidase activity"/>
    <property type="evidence" value="ECO:0007669"/>
    <property type="project" value="UniProtKB-EC"/>
</dbReference>
<dbReference type="GO" id="GO:0031638">
    <property type="term" value="P:zymogen activation"/>
    <property type="evidence" value="ECO:0000314"/>
    <property type="project" value="MGI"/>
</dbReference>
<dbReference type="CDD" id="cd00190">
    <property type="entry name" value="Tryp_SPc"/>
    <property type="match status" value="1"/>
</dbReference>
<dbReference type="FunFam" id="2.40.10.10:FF:000032">
    <property type="entry name" value="Kallikrein 1-related peptidase C9"/>
    <property type="match status" value="1"/>
</dbReference>
<dbReference type="FunFam" id="2.40.10.10:FF:000042">
    <property type="entry name" value="Kallikrein 1-related peptidase C9"/>
    <property type="match status" value="1"/>
</dbReference>
<dbReference type="Gene3D" id="2.40.10.10">
    <property type="entry name" value="Trypsin-like serine proteases"/>
    <property type="match status" value="2"/>
</dbReference>
<dbReference type="InterPro" id="IPR009003">
    <property type="entry name" value="Peptidase_S1_PA"/>
</dbReference>
<dbReference type="InterPro" id="IPR043504">
    <property type="entry name" value="Peptidase_S1_PA_chymotrypsin"/>
</dbReference>
<dbReference type="InterPro" id="IPR001314">
    <property type="entry name" value="Peptidase_S1A"/>
</dbReference>
<dbReference type="InterPro" id="IPR001254">
    <property type="entry name" value="Trypsin_dom"/>
</dbReference>
<dbReference type="InterPro" id="IPR018114">
    <property type="entry name" value="TRYPSIN_HIS"/>
</dbReference>
<dbReference type="InterPro" id="IPR033116">
    <property type="entry name" value="TRYPSIN_SER"/>
</dbReference>
<dbReference type="PANTHER" id="PTHR24271:SF47">
    <property type="entry name" value="KALLIKREIN-1"/>
    <property type="match status" value="1"/>
</dbReference>
<dbReference type="PANTHER" id="PTHR24271">
    <property type="entry name" value="KALLIKREIN-RELATED"/>
    <property type="match status" value="1"/>
</dbReference>
<dbReference type="Pfam" id="PF00089">
    <property type="entry name" value="Trypsin"/>
    <property type="match status" value="1"/>
</dbReference>
<dbReference type="PRINTS" id="PR00722">
    <property type="entry name" value="CHYMOTRYPSIN"/>
</dbReference>
<dbReference type="SMART" id="SM00020">
    <property type="entry name" value="Tryp_SPc"/>
    <property type="match status" value="1"/>
</dbReference>
<dbReference type="SUPFAM" id="SSF50494">
    <property type="entry name" value="Trypsin-like serine proteases"/>
    <property type="match status" value="1"/>
</dbReference>
<dbReference type="PROSITE" id="PS50240">
    <property type="entry name" value="TRYPSIN_DOM"/>
    <property type="match status" value="1"/>
</dbReference>
<dbReference type="PROSITE" id="PS00134">
    <property type="entry name" value="TRYPSIN_HIS"/>
    <property type="match status" value="1"/>
</dbReference>
<dbReference type="PROSITE" id="PS00135">
    <property type="entry name" value="TRYPSIN_SER"/>
    <property type="match status" value="1"/>
</dbReference>
<reference key="1">
    <citation type="journal article" date="1987" name="Biochemistry">
        <title>A complete cDNA sequence for the major epidermal growth factor binding protein in the male mouse submandibular gland.</title>
        <authorList>
            <person name="Blaber M."/>
            <person name="Isackson P.J."/>
            <person name="Bradshaw R.A."/>
        </authorList>
    </citation>
    <scope>NUCLEOTIDE SEQUENCE [MRNA]</scope>
</reference>
<reference key="2">
    <citation type="journal article" date="1987" name="Biochemistry">
        <title>Mouse glandular kallikrein genes: identification and characterization of the genes encoding the epidermal growth factor binding proteins.</title>
        <authorList>
            <person name="Drinkwater C.C."/>
            <person name="Evans B.A."/>
            <person name="Richards R.I."/>
        </authorList>
    </citation>
    <scope>NUCLEOTIDE SEQUENCE [GENOMIC DNA]</scope>
    <source>
        <strain>BALB/cJ</strain>
        <tissue>Salivary gland</tissue>
    </source>
</reference>
<reference key="3">
    <citation type="journal article" date="2004" name="Genome Res.">
        <title>The status, quality, and expansion of the NIH full-length cDNA project: the Mammalian Gene Collection (MGC).</title>
        <authorList>
            <consortium name="The MGC Project Team"/>
        </authorList>
    </citation>
    <scope>NUCLEOTIDE SEQUENCE [LARGE SCALE MRNA]</scope>
    <source>
        <strain>FVB/N</strain>
        <tissue>Salivary gland</tissue>
    </source>
</reference>
<reference key="4">
    <citation type="journal article" date="1987" name="J. Biol. Chem.">
        <title>Mouse glandular kallikrein genes. Structure and partial sequence analysis of the kallikrein gene locus.</title>
        <authorList>
            <person name="Evans B.A."/>
            <person name="Drinkwater C.C."/>
            <person name="Richards R.I."/>
        </authorList>
    </citation>
    <scope>NUCLEOTIDE SEQUENCE OF 16-54 AND 70-122</scope>
    <source>
        <strain>BALB/cJ</strain>
        <tissue>Liver</tissue>
    </source>
</reference>
<protein>
    <recommendedName>
        <fullName>Kallikrein 1-related peptidase b9</fullName>
        <ecNumber>3.4.21.35</ecNumber>
    </recommendedName>
    <alternativeName>
        <fullName>Epidermal growth factor-binding protein type C</fullName>
        <shortName>EGF-BP C</shortName>
    </alternativeName>
    <alternativeName>
        <fullName>Glandular kallikrein K9</fullName>
        <shortName>mGK-9</shortName>
    </alternativeName>
    <alternativeName>
        <fullName>Tissue kallikrein-9</fullName>
    </alternativeName>
</protein>
<evidence type="ECO:0000255" key="1">
    <source>
        <dbReference type="PROSITE-ProRule" id="PRU00274"/>
    </source>
</evidence>
<evidence type="ECO:0000305" key="2"/>
<name>K1KB9_MOUSE</name>
<comment type="function">
    <text>Glandular kallikreins cleave Met-Lys and Arg-Ser bonds in kininogen to release Lys-bradykinin.</text>
</comment>
<comment type="catalytic activity">
    <reaction>
        <text>Preferential cleavage of Arg-|-Xaa bonds in small molecule substrates. Highly selective action to release kallidin (lysyl-bradykinin) from kininogen involves hydrolysis of Met-|-Xaa or Leu-|-Xaa.</text>
        <dbReference type="EC" id="3.4.21.35"/>
    </reaction>
</comment>
<comment type="similarity">
    <text evidence="1">Belongs to the peptidase S1 family. Kallikrein subfamily.</text>
</comment>
<gene>
    <name type="primary">Klk1b9</name>
    <name type="synonym">Egfbp3</name>
    <name type="synonym">Klk-9</name>
    <name type="synonym">Klk9</name>
</gene>
<organism>
    <name type="scientific">Mus musculus</name>
    <name type="common">Mouse</name>
    <dbReference type="NCBI Taxonomy" id="10090"/>
    <lineage>
        <taxon>Eukaryota</taxon>
        <taxon>Metazoa</taxon>
        <taxon>Chordata</taxon>
        <taxon>Craniata</taxon>
        <taxon>Vertebrata</taxon>
        <taxon>Euteleostomi</taxon>
        <taxon>Mammalia</taxon>
        <taxon>Eutheria</taxon>
        <taxon>Euarchontoglires</taxon>
        <taxon>Glires</taxon>
        <taxon>Rodentia</taxon>
        <taxon>Myomorpha</taxon>
        <taxon>Muroidea</taxon>
        <taxon>Muridae</taxon>
        <taxon>Murinae</taxon>
        <taxon>Mus</taxon>
        <taxon>Mus</taxon>
    </lineage>
</organism>
<feature type="signal peptide" evidence="2">
    <location>
        <begin position="1"/>
        <end position="18"/>
    </location>
</feature>
<feature type="propeptide" id="PRO_0000027979" description="Activation peptide">
    <location>
        <begin position="19"/>
        <end position="24"/>
    </location>
</feature>
<feature type="chain" id="PRO_0000027980" description="Kallikrein 1-related peptidase b9">
    <location>
        <begin position="25"/>
        <end position="261"/>
    </location>
</feature>
<feature type="domain" description="Peptidase S1" evidence="1">
    <location>
        <begin position="25"/>
        <end position="258"/>
    </location>
</feature>
<feature type="active site" description="Charge relay system">
    <location>
        <position position="65"/>
    </location>
</feature>
<feature type="active site" description="Charge relay system">
    <location>
        <position position="120"/>
    </location>
</feature>
<feature type="active site" description="Charge relay system">
    <location>
        <position position="213"/>
    </location>
</feature>
<feature type="glycosylation site" description="N-linked (GlcNAc...) asparagine" evidence="2">
    <location>
        <position position="102"/>
    </location>
</feature>
<feature type="disulfide bond" evidence="1">
    <location>
        <begin position="31"/>
        <end position="173"/>
    </location>
</feature>
<feature type="disulfide bond" evidence="1">
    <location>
        <begin position="50"/>
        <end position="66"/>
    </location>
</feature>
<feature type="disulfide bond" evidence="1">
    <location>
        <begin position="152"/>
        <end position="219"/>
    </location>
</feature>
<feature type="disulfide bond" evidence="1">
    <location>
        <begin position="184"/>
        <end position="198"/>
    </location>
</feature>
<feature type="disulfide bond" evidence="1">
    <location>
        <begin position="209"/>
        <end position="234"/>
    </location>
</feature>
<sequence length="261" mass="28900">MRFLILFLALSLGGIDAAPPVHSRIVGGFKCEKNSQPWHVAVYRYNEYICGGVLLDANWVLTAAHCYYEENKVSLGKNNLYEEEPSAQHRLVSKSFLHPGYNRSLHRNHIRHPEYDYSNDLMLLRLSKPADITDVVKPIALPTEEPKLGSTCLASGWGSTTPFKFQNAKDLQCVNLKLLPNEDCGKAHIEKVTDVMLCAGETDGGKDTCKGDSGGPLICDGVLQGITSWGFTPCGEPKKPGVYTKLIKFTSWIKDTMAKNL</sequence>
<keyword id="KW-1015">Disulfide bond</keyword>
<keyword id="KW-0325">Glycoprotein</keyword>
<keyword id="KW-0378">Hydrolase</keyword>
<keyword id="KW-0645">Protease</keyword>
<keyword id="KW-1185">Reference proteome</keyword>
<keyword id="KW-0720">Serine protease</keyword>
<keyword id="KW-0732">Signal</keyword>
<keyword id="KW-0865">Zymogen</keyword>
<proteinExistence type="evidence at transcript level"/>
<accession>P15949</accession>